<feature type="signal peptide" evidence="1">
    <location>
        <begin position="1"/>
        <end position="26"/>
    </location>
</feature>
<feature type="chain" id="PRO_0000348258" description="Isthmin-1">
    <location>
        <begin position="27"/>
        <end position="461"/>
    </location>
</feature>
<feature type="domain" description="TSP type-1" evidence="2">
    <location>
        <begin position="215"/>
        <end position="259"/>
    </location>
</feature>
<feature type="domain" description="AMOP" evidence="3">
    <location>
        <begin position="286"/>
        <end position="449"/>
    </location>
</feature>
<feature type="region of interest" description="Disordered" evidence="4">
    <location>
        <begin position="40"/>
        <end position="62"/>
    </location>
</feature>
<feature type="region of interest" description="Disordered" evidence="4">
    <location>
        <begin position="73"/>
        <end position="92"/>
    </location>
</feature>
<feature type="region of interest" description="Disordered" evidence="4">
    <location>
        <begin position="128"/>
        <end position="188"/>
    </location>
</feature>
<feature type="compositionally biased region" description="Polar residues" evidence="4">
    <location>
        <begin position="40"/>
        <end position="58"/>
    </location>
</feature>
<feature type="compositionally biased region" description="Basic and acidic residues" evidence="4">
    <location>
        <begin position="131"/>
        <end position="141"/>
    </location>
</feature>
<feature type="compositionally biased region" description="Low complexity" evidence="4">
    <location>
        <begin position="156"/>
        <end position="165"/>
    </location>
</feature>
<feature type="glycosylation site" description="N-linked (GlcNAc...) asparagine" evidence="1">
    <location>
        <position position="33"/>
    </location>
</feature>
<feature type="glycosylation site" description="N-linked (GlcNAc...) asparagine" evidence="1">
    <location>
        <position position="282"/>
    </location>
</feature>
<feature type="disulfide bond" evidence="2">
    <location>
        <begin position="226"/>
        <end position="253"/>
    </location>
</feature>
<feature type="disulfide bond" evidence="2">
    <location>
        <begin position="230"/>
        <end position="258"/>
    </location>
</feature>
<feature type="disulfide bond" evidence="2">
    <location>
        <begin position="241"/>
        <end position="245"/>
    </location>
</feature>
<reference key="1">
    <citation type="journal article" date="2005" name="Curr. Biol.">
        <title>The Sp1-related transcription factors sp5 and sp5-like act downstream of Wnt/beta-catenin signaling in mesoderm and neuroectoderm patterning.</title>
        <authorList>
            <person name="Weidinger G."/>
            <person name="Thorpe C.J."/>
            <person name="Wuennenberg-Stapleton K."/>
            <person name="Ngai J."/>
            <person name="Moon R.T."/>
        </authorList>
    </citation>
    <scope>NUCLEOTIDE SEQUENCE [MRNA]</scope>
    <scope>INDUCTION</scope>
</reference>
<reference key="2">
    <citation type="submission" date="2004-12" db="EMBL/GenBank/DDBJ databases">
        <title>Isthmin-1 is regulated by Fgf and TGF beta signalling and contributes to early patterning of the zebrafish embryo.</title>
        <authorList>
            <person name="Raible F."/>
            <person name="Araki I."/>
            <person name="Brand M."/>
        </authorList>
    </citation>
    <scope>NUCLEOTIDE SEQUENCE [MRNA]</scope>
</reference>
<reference key="3">
    <citation type="submission" date="2007-11" db="EMBL/GenBank/DDBJ databases">
        <authorList>
            <consortium name="NIH - Zebrafish Gene Collection (ZGC) project"/>
        </authorList>
    </citation>
    <scope>NUCLEOTIDE SEQUENCE [LARGE SCALE MRNA]</scope>
    <source>
        <tissue>Embryo</tissue>
    </source>
</reference>
<reference key="4">
    <citation type="journal article" date="2011" name="J. Cell. Mol. Med.">
        <title>Isthmin is a novel secreted angiogenesis inhibitor that inhibits tumour growth in mice.</title>
        <authorList>
            <person name="Xiang W."/>
            <person name="Ke Z."/>
            <person name="Zhang Y."/>
            <person name="Cheng G.H."/>
            <person name="Irwan I.D."/>
            <person name="Sulochana K.N."/>
            <person name="Potturi P."/>
            <person name="Wang Z."/>
            <person name="Yang H."/>
            <person name="Wang J."/>
            <person name="Zhuo L."/>
            <person name="Kini R.M."/>
            <person name="Ge R."/>
        </authorList>
    </citation>
    <scope>DISRUPTION PHENOTYPE</scope>
    <scope>DEVELOPMENTAL STAGE</scope>
    <scope>FUNCTION</scope>
</reference>
<sequence>MVRLAAELLLLLGLLLLTLHITVLRSSPLQHGNDTVSLEQDSRVAENNVNADSSSSVQLGPGDRQTRVAHIPASQPWAQSPGTGGSLQRDGPGAFLLDLQNFPDLSKADINGQNPNIQVTIEVVDSLEGSEPEKGMRKENKPGWAAPNWRNWWQRSSSSSSSSVSTPKGPEEQDYPYESNTEDSNFLKPLGDWERRVKSEAGAGSRTQTEYDYIDGEGDWSAWSPCSVSCGNGNQKRTRSCGYACTATESRTCDMPSCPGIEDAFKTAATEVSLLAGTEEFNATELFGVDTDSCERWMNCKSEFLKKYMSKVATDLPSCPCFYPTEVAYSTADVHDANTKRNFRWKDASGPKEKLEIYKPTARYCIRSMLTLESTTLAAQHCCYDDSMKLITRGKGAGTPNLISTEFSADLHYKVDILPWIICKGDWSRYNHARPPNNGQKCAENPQDEDYYKQFEEAREF</sequence>
<organism>
    <name type="scientific">Danio rerio</name>
    <name type="common">Zebrafish</name>
    <name type="synonym">Brachydanio rerio</name>
    <dbReference type="NCBI Taxonomy" id="7955"/>
    <lineage>
        <taxon>Eukaryota</taxon>
        <taxon>Metazoa</taxon>
        <taxon>Chordata</taxon>
        <taxon>Craniata</taxon>
        <taxon>Vertebrata</taxon>
        <taxon>Euteleostomi</taxon>
        <taxon>Actinopterygii</taxon>
        <taxon>Neopterygii</taxon>
        <taxon>Teleostei</taxon>
        <taxon>Ostariophysi</taxon>
        <taxon>Cypriniformes</taxon>
        <taxon>Danionidae</taxon>
        <taxon>Danioninae</taxon>
        <taxon>Danio</taxon>
    </lineage>
</organism>
<name>ISM1_DANRE</name>
<dbReference type="EMBL" id="AY856371">
    <property type="protein sequence ID" value="AAX52519.1"/>
    <property type="molecule type" value="mRNA"/>
</dbReference>
<dbReference type="EMBL" id="AY884208">
    <property type="protein sequence ID" value="AAW79562.1"/>
    <property type="molecule type" value="mRNA"/>
</dbReference>
<dbReference type="EMBL" id="BC129141">
    <property type="protein sequence ID" value="AAI29142.1"/>
    <property type="molecule type" value="mRNA"/>
</dbReference>
<dbReference type="EMBL" id="BC155303">
    <property type="protein sequence ID" value="AAI55304.1"/>
    <property type="molecule type" value="mRNA"/>
</dbReference>
<dbReference type="RefSeq" id="NP_001012376.1">
    <property type="nucleotide sequence ID" value="NM_001012376.1"/>
</dbReference>
<dbReference type="SMR" id="Q5EGE1"/>
<dbReference type="FunCoup" id="Q5EGE1">
    <property type="interactions" value="1190"/>
</dbReference>
<dbReference type="STRING" id="7955.ENSDARP00000023737"/>
<dbReference type="GlyCosmos" id="Q5EGE1">
    <property type="glycosylation" value="2 sites, No reported glycans"/>
</dbReference>
<dbReference type="PaxDb" id="7955-ENSDARP00000023737"/>
<dbReference type="GeneID" id="497617"/>
<dbReference type="KEGG" id="dre:497617"/>
<dbReference type="AGR" id="ZFIN:ZDB-GENE-050523-3"/>
<dbReference type="CTD" id="140862"/>
<dbReference type="ZFIN" id="ZDB-GENE-050523-3">
    <property type="gene designation" value="ism1"/>
</dbReference>
<dbReference type="eggNOG" id="ENOG502QR6G">
    <property type="taxonomic scope" value="Eukaryota"/>
</dbReference>
<dbReference type="InParanoid" id="Q5EGE1"/>
<dbReference type="OrthoDB" id="9930623at2759"/>
<dbReference type="PhylomeDB" id="Q5EGE1"/>
<dbReference type="PRO" id="PR:Q5EGE1"/>
<dbReference type="Proteomes" id="UP000000437">
    <property type="component" value="Chromosome 13"/>
</dbReference>
<dbReference type="GO" id="GO:0005576">
    <property type="term" value="C:extracellular region"/>
    <property type="evidence" value="ECO:0007669"/>
    <property type="project" value="UniProtKB-SubCell"/>
</dbReference>
<dbReference type="GO" id="GO:0001525">
    <property type="term" value="P:angiogenesis"/>
    <property type="evidence" value="ECO:0000315"/>
    <property type="project" value="ZFIN"/>
</dbReference>
<dbReference type="GO" id="GO:0140374">
    <property type="term" value="P:antiviral innate immune response"/>
    <property type="evidence" value="ECO:0000314"/>
    <property type="project" value="ZFIN"/>
</dbReference>
<dbReference type="GO" id="GO:0035162">
    <property type="term" value="P:embryonic hemopoiesis"/>
    <property type="evidence" value="ECO:0000315"/>
    <property type="project" value="ZFIN"/>
</dbReference>
<dbReference type="GO" id="GO:0030218">
    <property type="term" value="P:erythrocyte differentiation"/>
    <property type="evidence" value="ECO:0000315"/>
    <property type="project" value="ZFIN"/>
</dbReference>
<dbReference type="GO" id="GO:0071425">
    <property type="term" value="P:hematopoietic stem cell proliferation"/>
    <property type="evidence" value="ECO:0000315"/>
    <property type="project" value="ZFIN"/>
</dbReference>
<dbReference type="GO" id="GO:0016525">
    <property type="term" value="P:negative regulation of angiogenesis"/>
    <property type="evidence" value="ECO:0000318"/>
    <property type="project" value="GO_Central"/>
</dbReference>
<dbReference type="FunFam" id="2.20.100.10:FF:000033">
    <property type="entry name" value="Isthmin 1"/>
    <property type="match status" value="1"/>
</dbReference>
<dbReference type="Gene3D" id="2.20.100.10">
    <property type="entry name" value="Thrombospondin type-1 (TSP1) repeat"/>
    <property type="match status" value="1"/>
</dbReference>
<dbReference type="InterPro" id="IPR005533">
    <property type="entry name" value="AMOP_dom"/>
</dbReference>
<dbReference type="InterPro" id="IPR051867">
    <property type="entry name" value="Angio_Inhib/Adhesion_GPCR"/>
</dbReference>
<dbReference type="InterPro" id="IPR000884">
    <property type="entry name" value="TSP1_rpt"/>
</dbReference>
<dbReference type="InterPro" id="IPR036383">
    <property type="entry name" value="TSP1_rpt_sf"/>
</dbReference>
<dbReference type="PANTHER" id="PTHR10239:SF30">
    <property type="entry name" value="ISTHMIN-1"/>
    <property type="match status" value="1"/>
</dbReference>
<dbReference type="PANTHER" id="PTHR10239">
    <property type="entry name" value="ISTHMIN-2"/>
    <property type="match status" value="1"/>
</dbReference>
<dbReference type="Pfam" id="PF03782">
    <property type="entry name" value="AMOP"/>
    <property type="match status" value="1"/>
</dbReference>
<dbReference type="Pfam" id="PF00090">
    <property type="entry name" value="TSP_1"/>
    <property type="match status" value="1"/>
</dbReference>
<dbReference type="SMART" id="SM00723">
    <property type="entry name" value="AMOP"/>
    <property type="match status" value="1"/>
</dbReference>
<dbReference type="SMART" id="SM00209">
    <property type="entry name" value="TSP1"/>
    <property type="match status" value="1"/>
</dbReference>
<dbReference type="SUPFAM" id="SSF82895">
    <property type="entry name" value="TSP-1 type 1 repeat"/>
    <property type="match status" value="1"/>
</dbReference>
<dbReference type="PROSITE" id="PS50856">
    <property type="entry name" value="AMOP"/>
    <property type="match status" value="1"/>
</dbReference>
<dbReference type="PROSITE" id="PS50092">
    <property type="entry name" value="TSP1"/>
    <property type="match status" value="1"/>
</dbReference>
<gene>
    <name type="primary">ism1</name>
</gene>
<accession>Q5EGE1</accession>
<keyword id="KW-1015">Disulfide bond</keyword>
<keyword id="KW-0325">Glycoprotein</keyword>
<keyword id="KW-1185">Reference proteome</keyword>
<keyword id="KW-0964">Secreted</keyword>
<keyword id="KW-0732">Signal</keyword>
<protein>
    <recommendedName>
        <fullName>Isthmin-1</fullName>
    </recommendedName>
</protein>
<comment type="function">
    <text evidence="6">May specifically influence certain angiogenesis process (PubMed:19874420).</text>
</comment>
<comment type="subcellular location">
    <subcellularLocation>
        <location evidence="7">Secreted</location>
    </subcellularLocation>
</comment>
<comment type="developmental stage">
    <text evidence="6">Expressed from the late gastrulation/early segmentation stage in the midbrain/hindbrain boundary (MHB) and in the posterior trunk region. Subsequently, its expression is restricted in the tail bud region and notochord. At 22 hrs after fertilization (hpf), high level expression is observed in the notochord and MHB. The tail bud expression declined by 30 hpf. Notochord expression declines at 48 hpf and disappears by 72 hpf although low level MHB expression remains until 72 hpf (PubMed:19874420).</text>
</comment>
<comment type="induction">
    <text evidence="5">Up-regulated by Wnt signaling.</text>
</comment>
<comment type="disruption phenotype">
    <text evidence="6">Morpholino knockdown of the protein causes disorganized intersegmental vessels in the trunk.</text>
</comment>
<comment type="similarity">
    <text evidence="7">Belongs to the isthmin family.</text>
</comment>
<evidence type="ECO:0000255" key="1"/>
<evidence type="ECO:0000255" key="2">
    <source>
        <dbReference type="PROSITE-ProRule" id="PRU00210"/>
    </source>
</evidence>
<evidence type="ECO:0000255" key="3">
    <source>
        <dbReference type="PROSITE-ProRule" id="PRU00347"/>
    </source>
</evidence>
<evidence type="ECO:0000256" key="4">
    <source>
        <dbReference type="SAM" id="MobiDB-lite"/>
    </source>
</evidence>
<evidence type="ECO:0000269" key="5">
    <source>
    </source>
</evidence>
<evidence type="ECO:0000269" key="6">
    <source>
    </source>
</evidence>
<evidence type="ECO:0000305" key="7"/>
<proteinExistence type="evidence at transcript level"/>